<gene>
    <name evidence="1" type="primary">folE2</name>
    <name type="ordered locus">XF_2096</name>
</gene>
<evidence type="ECO:0000255" key="1">
    <source>
        <dbReference type="HAMAP-Rule" id="MF_01527"/>
    </source>
</evidence>
<evidence type="ECO:0000305" key="2"/>
<protein>
    <recommendedName>
        <fullName evidence="1">GTP cyclohydrolase FolE2</fullName>
        <ecNumber evidence="1">3.5.4.16</ecNumber>
    </recommendedName>
</protein>
<accession>Q9PBP4</accession>
<keyword id="KW-0378">Hydrolase</keyword>
<organism>
    <name type="scientific">Xylella fastidiosa (strain 9a5c)</name>
    <dbReference type="NCBI Taxonomy" id="160492"/>
    <lineage>
        <taxon>Bacteria</taxon>
        <taxon>Pseudomonadati</taxon>
        <taxon>Pseudomonadota</taxon>
        <taxon>Gammaproteobacteria</taxon>
        <taxon>Lysobacterales</taxon>
        <taxon>Lysobacteraceae</taxon>
        <taxon>Xylella</taxon>
    </lineage>
</organism>
<name>GCH4_XYLFA</name>
<proteinExistence type="inferred from homology"/>
<feature type="chain" id="PRO_0000147736" description="GTP cyclohydrolase FolE2">
    <location>
        <begin position="1"/>
        <end position="298"/>
    </location>
</feature>
<feature type="site" description="May be catalytically important" evidence="1">
    <location>
        <position position="155"/>
    </location>
</feature>
<sequence>MSTSIPDVAVHDSPAVAAPLRWVGMDGIVVPVQLTTADGGQHVIGRARAQIDLPAMEVKGIHMSRLYRLLDTHAVEPLTPVGICGLLSAMVNSHADCASTAARVDWHFDWLRRVPALVSNDLSGWRGYPVSLRAEYSAVHVQFWLCVEVGYSSTCPCSAALARQMLADAFLQEHVEVSALSPETVADWLRSNGSYATPHSQRSVARIEVALTEQAVELGLPALVDCAERILSTPVQAAVRRVDEQAFARLNGANLMYVEDATRRLQHGLAIHYSAFRVHVRHLESLHPHDAVASTVDE</sequence>
<dbReference type="EC" id="3.5.4.16" evidence="1"/>
<dbReference type="EMBL" id="AE003849">
    <property type="protein sequence ID" value="AAF84895.1"/>
    <property type="status" value="ALT_INIT"/>
    <property type="molecule type" value="Genomic_DNA"/>
</dbReference>
<dbReference type="PIR" id="E82600">
    <property type="entry name" value="E82600"/>
</dbReference>
<dbReference type="RefSeq" id="WP_031336508.1">
    <property type="nucleotide sequence ID" value="NC_002488.3"/>
</dbReference>
<dbReference type="SMR" id="Q9PBP4"/>
<dbReference type="STRING" id="160492.XF_2096"/>
<dbReference type="KEGG" id="xfa:XF_2096"/>
<dbReference type="eggNOG" id="COG1469">
    <property type="taxonomic scope" value="Bacteria"/>
</dbReference>
<dbReference type="HOGENOM" id="CLU_062816_0_0_6"/>
<dbReference type="UniPathway" id="UPA00848">
    <property type="reaction ID" value="UER00151"/>
</dbReference>
<dbReference type="Proteomes" id="UP000000812">
    <property type="component" value="Chromosome"/>
</dbReference>
<dbReference type="GO" id="GO:0003934">
    <property type="term" value="F:GTP cyclohydrolase I activity"/>
    <property type="evidence" value="ECO:0007669"/>
    <property type="project" value="UniProtKB-UniRule"/>
</dbReference>
<dbReference type="GO" id="GO:0046654">
    <property type="term" value="P:tetrahydrofolate biosynthetic process"/>
    <property type="evidence" value="ECO:0007669"/>
    <property type="project" value="UniProtKB-UniRule"/>
</dbReference>
<dbReference type="Gene3D" id="3.10.270.10">
    <property type="entry name" value="Urate Oxidase"/>
    <property type="match status" value="1"/>
</dbReference>
<dbReference type="HAMAP" id="MF_01527_B">
    <property type="entry name" value="GTP_cyclohydrol_B"/>
    <property type="match status" value="1"/>
</dbReference>
<dbReference type="InterPro" id="IPR022838">
    <property type="entry name" value="GTP_cyclohydrolase_FolE2"/>
</dbReference>
<dbReference type="InterPro" id="IPR003801">
    <property type="entry name" value="GTP_cyclohydrolase_FolE2/MptA"/>
</dbReference>
<dbReference type="NCBIfam" id="NF010200">
    <property type="entry name" value="PRK13674.1-1"/>
    <property type="match status" value="1"/>
</dbReference>
<dbReference type="PANTHER" id="PTHR36445">
    <property type="entry name" value="GTP CYCLOHYDROLASE MPTA"/>
    <property type="match status" value="1"/>
</dbReference>
<dbReference type="PANTHER" id="PTHR36445:SF1">
    <property type="entry name" value="GTP CYCLOHYDROLASE MPTA"/>
    <property type="match status" value="1"/>
</dbReference>
<dbReference type="Pfam" id="PF02649">
    <property type="entry name" value="GCHY-1"/>
    <property type="match status" value="1"/>
</dbReference>
<comment type="function">
    <text evidence="1">Converts GTP to 7,8-dihydroneopterin triphosphate.</text>
</comment>
<comment type="catalytic activity">
    <reaction evidence="1">
        <text>GTP + H2O = 7,8-dihydroneopterin 3'-triphosphate + formate + H(+)</text>
        <dbReference type="Rhea" id="RHEA:17473"/>
        <dbReference type="ChEBI" id="CHEBI:15377"/>
        <dbReference type="ChEBI" id="CHEBI:15378"/>
        <dbReference type="ChEBI" id="CHEBI:15740"/>
        <dbReference type="ChEBI" id="CHEBI:37565"/>
        <dbReference type="ChEBI" id="CHEBI:58462"/>
        <dbReference type="EC" id="3.5.4.16"/>
    </reaction>
</comment>
<comment type="pathway">
    <text evidence="1">Cofactor biosynthesis; 7,8-dihydroneopterin triphosphate biosynthesis; 7,8-dihydroneopterin triphosphate from GTP: step 1/1.</text>
</comment>
<comment type="similarity">
    <text evidence="1">Belongs to the GTP cyclohydrolase IV family.</text>
</comment>
<comment type="sequence caution" evidence="2">
    <conflict type="erroneous initiation">
        <sequence resource="EMBL-CDS" id="AAF84895"/>
    </conflict>
</comment>
<reference key="1">
    <citation type="journal article" date="2000" name="Nature">
        <title>The genome sequence of the plant pathogen Xylella fastidiosa.</title>
        <authorList>
            <person name="Simpson A.J.G."/>
            <person name="Reinach F.C."/>
            <person name="Arruda P."/>
            <person name="Abreu F.A."/>
            <person name="Acencio M."/>
            <person name="Alvarenga R."/>
            <person name="Alves L.M.C."/>
            <person name="Araya J.E."/>
            <person name="Baia G.S."/>
            <person name="Baptista C.S."/>
            <person name="Barros M.H."/>
            <person name="Bonaccorsi E.D."/>
            <person name="Bordin S."/>
            <person name="Bove J.M."/>
            <person name="Briones M.R.S."/>
            <person name="Bueno M.R.P."/>
            <person name="Camargo A.A."/>
            <person name="Camargo L.E.A."/>
            <person name="Carraro D.M."/>
            <person name="Carrer H."/>
            <person name="Colauto N.B."/>
            <person name="Colombo C."/>
            <person name="Costa F.F."/>
            <person name="Costa M.C.R."/>
            <person name="Costa-Neto C.M."/>
            <person name="Coutinho L.L."/>
            <person name="Cristofani M."/>
            <person name="Dias-Neto E."/>
            <person name="Docena C."/>
            <person name="El-Dorry H."/>
            <person name="Facincani A.P."/>
            <person name="Ferreira A.J.S."/>
            <person name="Ferreira V.C.A."/>
            <person name="Ferro J.A."/>
            <person name="Fraga J.S."/>
            <person name="Franca S.C."/>
            <person name="Franco M.C."/>
            <person name="Frohme M."/>
            <person name="Furlan L.R."/>
            <person name="Garnier M."/>
            <person name="Goldman G.H."/>
            <person name="Goldman M.H.S."/>
            <person name="Gomes S.L."/>
            <person name="Gruber A."/>
            <person name="Ho P.L."/>
            <person name="Hoheisel J.D."/>
            <person name="Junqueira M.L."/>
            <person name="Kemper E.L."/>
            <person name="Kitajima J.P."/>
            <person name="Krieger J.E."/>
            <person name="Kuramae E.E."/>
            <person name="Laigret F."/>
            <person name="Lambais M.R."/>
            <person name="Leite L.C.C."/>
            <person name="Lemos E.G.M."/>
            <person name="Lemos M.V.F."/>
            <person name="Lopes S.A."/>
            <person name="Lopes C.R."/>
            <person name="Machado J.A."/>
            <person name="Machado M.A."/>
            <person name="Madeira A.M.B.N."/>
            <person name="Madeira H.M.F."/>
            <person name="Marino C.L."/>
            <person name="Marques M.V."/>
            <person name="Martins E.A.L."/>
            <person name="Martins E.M.F."/>
            <person name="Matsukuma A.Y."/>
            <person name="Menck C.F.M."/>
            <person name="Miracca E.C."/>
            <person name="Miyaki C.Y."/>
            <person name="Monteiro-Vitorello C.B."/>
            <person name="Moon D.H."/>
            <person name="Nagai M.A."/>
            <person name="Nascimento A.L.T.O."/>
            <person name="Netto L.E.S."/>
            <person name="Nhani A. Jr."/>
            <person name="Nobrega F.G."/>
            <person name="Nunes L.R."/>
            <person name="Oliveira M.A."/>
            <person name="de Oliveira M.C."/>
            <person name="de Oliveira R.C."/>
            <person name="Palmieri D.A."/>
            <person name="Paris A."/>
            <person name="Peixoto B.R."/>
            <person name="Pereira G.A.G."/>
            <person name="Pereira H.A. Jr."/>
            <person name="Pesquero J.B."/>
            <person name="Quaggio R.B."/>
            <person name="Roberto P.G."/>
            <person name="Rodrigues V."/>
            <person name="de Rosa A.J.M."/>
            <person name="de Rosa V.E. Jr."/>
            <person name="de Sa R.G."/>
            <person name="Santelli R.V."/>
            <person name="Sawasaki H.E."/>
            <person name="da Silva A.C.R."/>
            <person name="da Silva A.M."/>
            <person name="da Silva F.R."/>
            <person name="Silva W.A. Jr."/>
            <person name="da Silveira J.F."/>
            <person name="Silvestri M.L.Z."/>
            <person name="Siqueira W.J."/>
            <person name="de Souza A.A."/>
            <person name="de Souza A.P."/>
            <person name="Terenzi M.F."/>
            <person name="Truffi D."/>
            <person name="Tsai S.M."/>
            <person name="Tsuhako M.H."/>
            <person name="Vallada H."/>
            <person name="Van Sluys M.A."/>
            <person name="Verjovski-Almeida S."/>
            <person name="Vettore A.L."/>
            <person name="Zago M.A."/>
            <person name="Zatz M."/>
            <person name="Meidanis J."/>
            <person name="Setubal J.C."/>
        </authorList>
    </citation>
    <scope>NUCLEOTIDE SEQUENCE [LARGE SCALE GENOMIC DNA]</scope>
    <source>
        <strain>9a5c</strain>
    </source>
</reference>